<protein>
    <recommendedName>
        <fullName evidence="1">ATP synthase subunit beta, chloroplastic</fullName>
        <ecNumber evidence="1">7.1.2.2</ecNumber>
    </recommendedName>
    <alternativeName>
        <fullName evidence="1">ATP synthase F1 sector subunit beta</fullName>
    </alternativeName>
    <alternativeName>
        <fullName evidence="1">F-ATPase subunit beta</fullName>
    </alternativeName>
</protein>
<proteinExistence type="inferred from homology"/>
<comment type="function">
    <text evidence="1">Produces ATP from ADP in the presence of a proton gradient across the membrane. The catalytic sites are hosted primarily by the beta subunits.</text>
</comment>
<comment type="catalytic activity">
    <reaction evidence="1">
        <text>ATP + H2O + 4 H(+)(in) = ADP + phosphate + 5 H(+)(out)</text>
        <dbReference type="Rhea" id="RHEA:57720"/>
        <dbReference type="ChEBI" id="CHEBI:15377"/>
        <dbReference type="ChEBI" id="CHEBI:15378"/>
        <dbReference type="ChEBI" id="CHEBI:30616"/>
        <dbReference type="ChEBI" id="CHEBI:43474"/>
        <dbReference type="ChEBI" id="CHEBI:456216"/>
        <dbReference type="EC" id="7.1.2.2"/>
    </reaction>
</comment>
<comment type="subunit">
    <text evidence="1">F-type ATPases have 2 components, CF(1) - the catalytic core - and CF(0) - the membrane proton channel. CF(1) has five subunits: alpha(3), beta(3), gamma(1), delta(1), epsilon(1). CF(0) has four main subunits: a(1), b(1), b'(1) and c(9-12).</text>
</comment>
<comment type="subcellular location">
    <subcellularLocation>
        <location evidence="1">Plastid</location>
        <location evidence="1">Chloroplast thylakoid membrane</location>
        <topology evidence="1">Peripheral membrane protein</topology>
    </subcellularLocation>
</comment>
<comment type="similarity">
    <text evidence="1">Belongs to the ATPase alpha/beta chains family.</text>
</comment>
<organism>
    <name type="scientific">Ipomoea purpurea</name>
    <name type="common">Common morning glory</name>
    <name type="synonym">Pharbitis purpurea</name>
    <dbReference type="NCBI Taxonomy" id="4121"/>
    <lineage>
        <taxon>Eukaryota</taxon>
        <taxon>Viridiplantae</taxon>
        <taxon>Streptophyta</taxon>
        <taxon>Embryophyta</taxon>
        <taxon>Tracheophyta</taxon>
        <taxon>Spermatophyta</taxon>
        <taxon>Magnoliopsida</taxon>
        <taxon>eudicotyledons</taxon>
        <taxon>Gunneridae</taxon>
        <taxon>Pentapetalae</taxon>
        <taxon>asterids</taxon>
        <taxon>lamiids</taxon>
        <taxon>Solanales</taxon>
        <taxon>Convolvulaceae</taxon>
        <taxon>Ipomoeeae</taxon>
        <taxon>Ipomoea</taxon>
    </lineage>
</organism>
<feature type="chain" id="PRO_0000339622" description="ATP synthase subunit beta, chloroplastic">
    <location>
        <begin position="1"/>
        <end position="499"/>
    </location>
</feature>
<feature type="binding site" evidence="1">
    <location>
        <begin position="170"/>
        <end position="177"/>
    </location>
    <ligand>
        <name>ATP</name>
        <dbReference type="ChEBI" id="CHEBI:30616"/>
    </ligand>
</feature>
<gene>
    <name evidence="1" type="primary">atpB</name>
</gene>
<sequence>MRINPTTSGSEVSAVEKKNLGRIVKIIGPVLDVAFPPGKMPNIYNALVVQGRDNEQTNVTCEVQQLLGNNRVRAVAMSDTDGLMRGMEVIDTGAPISVPVGGSTLGRIFNVLGQPVDNLGPVDTNTTSPIHRSAPAFIQLDTKLSIFETGIKVVDLLAPYRRGGKIGLFGGAGVGKTVLIMELINNIAKAHGGVSVFGGVGERTREGNDLYLEMKESGVINEENIPESKVALVYGQMNEPPGARMRVGLTALTMAEYFRDVNEQDVLLFIDNIFRFVQAGSEVSALLGRMPSAVGYQPTLSTEMGSLQERITSTKEGSITSIQAVYVPADDLTDPAPATTFAHLDATTVLSRGLAAKGIYPAVDPLDSTSTMLQPRIVGEEHYETAQRVKQTLQRYKELQDIIAILGLDELSEEDRLTVARARKIERFLSQPFFVAEVFTGSPGKYVGLAETIRGFQSILSGELDGLPEQAFYLVGNIDEATAKAMNLKNLEMESDLKK</sequence>
<name>ATPB_IPOPU</name>
<reference key="1">
    <citation type="journal article" date="2007" name="BMC Plant Biol.">
        <title>Complete plastid genome sequences suggest strong selection for retention of photosynthetic genes in the parasitic plant genus Cuscuta.</title>
        <authorList>
            <person name="McNeal J.R."/>
            <person name="Kuehl J.V."/>
            <person name="Boore J.L."/>
            <person name="dePamphilis C.W."/>
        </authorList>
    </citation>
    <scope>NUCLEOTIDE SEQUENCE [LARGE SCALE GENOMIC DNA]</scope>
</reference>
<dbReference type="EC" id="7.1.2.2" evidence="1"/>
<dbReference type="EMBL" id="EU118126">
    <property type="protein sequence ID" value="ABV02355.1"/>
    <property type="molecule type" value="Genomic_DNA"/>
</dbReference>
<dbReference type="RefSeq" id="YP_001468315.1">
    <property type="nucleotide sequence ID" value="NC_009808.1"/>
</dbReference>
<dbReference type="SMR" id="A7Y3E6"/>
<dbReference type="GeneID" id="5601254"/>
<dbReference type="GO" id="GO:0009535">
    <property type="term" value="C:chloroplast thylakoid membrane"/>
    <property type="evidence" value="ECO:0007669"/>
    <property type="project" value="UniProtKB-SubCell"/>
</dbReference>
<dbReference type="GO" id="GO:0005739">
    <property type="term" value="C:mitochondrion"/>
    <property type="evidence" value="ECO:0007669"/>
    <property type="project" value="GOC"/>
</dbReference>
<dbReference type="GO" id="GO:0045259">
    <property type="term" value="C:proton-transporting ATP synthase complex"/>
    <property type="evidence" value="ECO:0007669"/>
    <property type="project" value="UniProtKB-KW"/>
</dbReference>
<dbReference type="GO" id="GO:0005524">
    <property type="term" value="F:ATP binding"/>
    <property type="evidence" value="ECO:0007669"/>
    <property type="project" value="UniProtKB-UniRule"/>
</dbReference>
<dbReference type="GO" id="GO:0016887">
    <property type="term" value="F:ATP hydrolysis activity"/>
    <property type="evidence" value="ECO:0007669"/>
    <property type="project" value="InterPro"/>
</dbReference>
<dbReference type="GO" id="GO:0046933">
    <property type="term" value="F:proton-transporting ATP synthase activity, rotational mechanism"/>
    <property type="evidence" value="ECO:0007669"/>
    <property type="project" value="UniProtKB-UniRule"/>
</dbReference>
<dbReference type="GO" id="GO:0042776">
    <property type="term" value="P:proton motive force-driven mitochondrial ATP synthesis"/>
    <property type="evidence" value="ECO:0007669"/>
    <property type="project" value="TreeGrafter"/>
</dbReference>
<dbReference type="CDD" id="cd18110">
    <property type="entry name" value="ATP-synt_F1_beta_C"/>
    <property type="match status" value="1"/>
</dbReference>
<dbReference type="CDD" id="cd18115">
    <property type="entry name" value="ATP-synt_F1_beta_N"/>
    <property type="match status" value="1"/>
</dbReference>
<dbReference type="CDD" id="cd01133">
    <property type="entry name" value="F1-ATPase_beta_CD"/>
    <property type="match status" value="1"/>
</dbReference>
<dbReference type="FunFam" id="1.10.1140.10:FF:000001">
    <property type="entry name" value="ATP synthase subunit beta"/>
    <property type="match status" value="1"/>
</dbReference>
<dbReference type="FunFam" id="3.40.50.12240:FF:000006">
    <property type="entry name" value="ATP synthase subunit beta"/>
    <property type="match status" value="1"/>
</dbReference>
<dbReference type="FunFam" id="3.40.50.300:FF:000004">
    <property type="entry name" value="ATP synthase subunit beta"/>
    <property type="match status" value="1"/>
</dbReference>
<dbReference type="FunFam" id="2.40.10.170:FF:000002">
    <property type="entry name" value="ATP synthase subunit beta, chloroplastic"/>
    <property type="match status" value="1"/>
</dbReference>
<dbReference type="Gene3D" id="2.40.10.170">
    <property type="match status" value="1"/>
</dbReference>
<dbReference type="Gene3D" id="1.10.1140.10">
    <property type="entry name" value="Bovine Mitochondrial F1-atpase, Atp Synthase Beta Chain, Chain D, domain 3"/>
    <property type="match status" value="1"/>
</dbReference>
<dbReference type="Gene3D" id="3.40.50.300">
    <property type="entry name" value="P-loop containing nucleotide triphosphate hydrolases"/>
    <property type="match status" value="1"/>
</dbReference>
<dbReference type="HAMAP" id="MF_01347">
    <property type="entry name" value="ATP_synth_beta_bact"/>
    <property type="match status" value="1"/>
</dbReference>
<dbReference type="InterPro" id="IPR003593">
    <property type="entry name" value="AAA+_ATPase"/>
</dbReference>
<dbReference type="InterPro" id="IPR055190">
    <property type="entry name" value="ATP-synt_VA_C"/>
</dbReference>
<dbReference type="InterPro" id="IPR005722">
    <property type="entry name" value="ATP_synth_F1_bsu"/>
</dbReference>
<dbReference type="InterPro" id="IPR020003">
    <property type="entry name" value="ATPase_a/bsu_AS"/>
</dbReference>
<dbReference type="InterPro" id="IPR050053">
    <property type="entry name" value="ATPase_alpha/beta_chains"/>
</dbReference>
<dbReference type="InterPro" id="IPR004100">
    <property type="entry name" value="ATPase_F1/V1/A1_a/bsu_N"/>
</dbReference>
<dbReference type="InterPro" id="IPR036121">
    <property type="entry name" value="ATPase_F1/V1/A1_a/bsu_N_sf"/>
</dbReference>
<dbReference type="InterPro" id="IPR000194">
    <property type="entry name" value="ATPase_F1/V1/A1_a/bsu_nucl-bd"/>
</dbReference>
<dbReference type="InterPro" id="IPR024034">
    <property type="entry name" value="ATPase_F1/V1_b/a_C"/>
</dbReference>
<dbReference type="InterPro" id="IPR027417">
    <property type="entry name" value="P-loop_NTPase"/>
</dbReference>
<dbReference type="NCBIfam" id="TIGR01039">
    <property type="entry name" value="atpD"/>
    <property type="match status" value="1"/>
</dbReference>
<dbReference type="PANTHER" id="PTHR15184">
    <property type="entry name" value="ATP SYNTHASE"/>
    <property type="match status" value="1"/>
</dbReference>
<dbReference type="PANTHER" id="PTHR15184:SF71">
    <property type="entry name" value="ATP SYNTHASE SUBUNIT BETA, MITOCHONDRIAL"/>
    <property type="match status" value="1"/>
</dbReference>
<dbReference type="Pfam" id="PF00006">
    <property type="entry name" value="ATP-synt_ab"/>
    <property type="match status" value="1"/>
</dbReference>
<dbReference type="Pfam" id="PF02874">
    <property type="entry name" value="ATP-synt_ab_N"/>
    <property type="match status" value="1"/>
</dbReference>
<dbReference type="Pfam" id="PF22919">
    <property type="entry name" value="ATP-synt_VA_C"/>
    <property type="match status" value="1"/>
</dbReference>
<dbReference type="SMART" id="SM00382">
    <property type="entry name" value="AAA"/>
    <property type="match status" value="1"/>
</dbReference>
<dbReference type="SUPFAM" id="SSF47917">
    <property type="entry name" value="C-terminal domain of alpha and beta subunits of F1 ATP synthase"/>
    <property type="match status" value="1"/>
</dbReference>
<dbReference type="SUPFAM" id="SSF50615">
    <property type="entry name" value="N-terminal domain of alpha and beta subunits of F1 ATP synthase"/>
    <property type="match status" value="1"/>
</dbReference>
<dbReference type="SUPFAM" id="SSF52540">
    <property type="entry name" value="P-loop containing nucleoside triphosphate hydrolases"/>
    <property type="match status" value="1"/>
</dbReference>
<dbReference type="PROSITE" id="PS00152">
    <property type="entry name" value="ATPASE_ALPHA_BETA"/>
    <property type="match status" value="1"/>
</dbReference>
<geneLocation type="chloroplast"/>
<evidence type="ECO:0000255" key="1">
    <source>
        <dbReference type="HAMAP-Rule" id="MF_01347"/>
    </source>
</evidence>
<keyword id="KW-0066">ATP synthesis</keyword>
<keyword id="KW-0067">ATP-binding</keyword>
<keyword id="KW-0139">CF(1)</keyword>
<keyword id="KW-0150">Chloroplast</keyword>
<keyword id="KW-0375">Hydrogen ion transport</keyword>
<keyword id="KW-0406">Ion transport</keyword>
<keyword id="KW-0472">Membrane</keyword>
<keyword id="KW-0547">Nucleotide-binding</keyword>
<keyword id="KW-0934">Plastid</keyword>
<keyword id="KW-0793">Thylakoid</keyword>
<keyword id="KW-1278">Translocase</keyword>
<keyword id="KW-0813">Transport</keyword>
<accession>A7Y3E6</accession>